<dbReference type="EMBL" id="AY642923">
    <property type="protein sequence ID" value="AAT68573.1"/>
    <property type="molecule type" value="Genomic_DNA"/>
</dbReference>
<dbReference type="EMBL" id="AY642924">
    <property type="protein sequence ID" value="AAT68574.1"/>
    <property type="molecule type" value="Genomic_DNA"/>
</dbReference>
<dbReference type="SMR" id="Q6DUL2"/>
<dbReference type="GO" id="GO:0005743">
    <property type="term" value="C:mitochondrial inner membrane"/>
    <property type="evidence" value="ECO:0007669"/>
    <property type="project" value="UniProtKB-SubCell"/>
</dbReference>
<dbReference type="GO" id="GO:0045275">
    <property type="term" value="C:respiratory chain complex III"/>
    <property type="evidence" value="ECO:0007669"/>
    <property type="project" value="InterPro"/>
</dbReference>
<dbReference type="GO" id="GO:0046872">
    <property type="term" value="F:metal ion binding"/>
    <property type="evidence" value="ECO:0007669"/>
    <property type="project" value="UniProtKB-KW"/>
</dbReference>
<dbReference type="GO" id="GO:0008121">
    <property type="term" value="F:ubiquinol-cytochrome-c reductase activity"/>
    <property type="evidence" value="ECO:0007669"/>
    <property type="project" value="InterPro"/>
</dbReference>
<dbReference type="GO" id="GO:0006122">
    <property type="term" value="P:mitochondrial electron transport, ubiquinol to cytochrome c"/>
    <property type="evidence" value="ECO:0007669"/>
    <property type="project" value="TreeGrafter"/>
</dbReference>
<dbReference type="CDD" id="cd00290">
    <property type="entry name" value="cytochrome_b_C"/>
    <property type="match status" value="1"/>
</dbReference>
<dbReference type="CDD" id="cd00284">
    <property type="entry name" value="Cytochrome_b_N"/>
    <property type="match status" value="1"/>
</dbReference>
<dbReference type="FunFam" id="1.20.810.10:FF:000002">
    <property type="entry name" value="Cytochrome b"/>
    <property type="match status" value="1"/>
</dbReference>
<dbReference type="Gene3D" id="1.20.810.10">
    <property type="entry name" value="Cytochrome Bc1 Complex, Chain C"/>
    <property type="match status" value="1"/>
</dbReference>
<dbReference type="InterPro" id="IPR005798">
    <property type="entry name" value="Cyt_b/b6_C"/>
</dbReference>
<dbReference type="InterPro" id="IPR036150">
    <property type="entry name" value="Cyt_b/b6_C_sf"/>
</dbReference>
<dbReference type="InterPro" id="IPR005797">
    <property type="entry name" value="Cyt_b/b6_N"/>
</dbReference>
<dbReference type="InterPro" id="IPR027387">
    <property type="entry name" value="Cytb/b6-like_sf"/>
</dbReference>
<dbReference type="InterPro" id="IPR030689">
    <property type="entry name" value="Cytochrome_b"/>
</dbReference>
<dbReference type="InterPro" id="IPR048260">
    <property type="entry name" value="Cytochrome_b_C_euk/bac"/>
</dbReference>
<dbReference type="InterPro" id="IPR048259">
    <property type="entry name" value="Cytochrome_b_N_euk/bac"/>
</dbReference>
<dbReference type="InterPro" id="IPR016174">
    <property type="entry name" value="Di-haem_cyt_TM"/>
</dbReference>
<dbReference type="PANTHER" id="PTHR19271">
    <property type="entry name" value="CYTOCHROME B"/>
    <property type="match status" value="1"/>
</dbReference>
<dbReference type="PANTHER" id="PTHR19271:SF16">
    <property type="entry name" value="CYTOCHROME B"/>
    <property type="match status" value="1"/>
</dbReference>
<dbReference type="Pfam" id="PF00032">
    <property type="entry name" value="Cytochrom_B_C"/>
    <property type="match status" value="1"/>
</dbReference>
<dbReference type="Pfam" id="PF00033">
    <property type="entry name" value="Cytochrome_B"/>
    <property type="match status" value="1"/>
</dbReference>
<dbReference type="PIRSF" id="PIRSF038885">
    <property type="entry name" value="COB"/>
    <property type="match status" value="1"/>
</dbReference>
<dbReference type="SUPFAM" id="SSF81648">
    <property type="entry name" value="a domain/subunit of cytochrome bc1 complex (Ubiquinol-cytochrome c reductase)"/>
    <property type="match status" value="1"/>
</dbReference>
<dbReference type="SUPFAM" id="SSF81342">
    <property type="entry name" value="Transmembrane di-heme cytochromes"/>
    <property type="match status" value="1"/>
</dbReference>
<dbReference type="PROSITE" id="PS51003">
    <property type="entry name" value="CYTB_CTER"/>
    <property type="match status" value="1"/>
</dbReference>
<dbReference type="PROSITE" id="PS51002">
    <property type="entry name" value="CYTB_NTER"/>
    <property type="match status" value="1"/>
</dbReference>
<keyword id="KW-0249">Electron transport</keyword>
<keyword id="KW-0349">Heme</keyword>
<keyword id="KW-0408">Iron</keyword>
<keyword id="KW-0472">Membrane</keyword>
<keyword id="KW-0479">Metal-binding</keyword>
<keyword id="KW-0496">Mitochondrion</keyword>
<keyword id="KW-0999">Mitochondrion inner membrane</keyword>
<keyword id="KW-0679">Respiratory chain</keyword>
<keyword id="KW-0812">Transmembrane</keyword>
<keyword id="KW-1133">Transmembrane helix</keyword>
<keyword id="KW-0813">Transport</keyword>
<keyword id="KW-0830">Ubiquinone</keyword>
<reference key="1">
    <citation type="journal article" date="2004" name="Acta Chiropt.">
        <title>Molecular differentiation of large species of fruit-eating bats (Artibeus) and phylogenetic relationships based on the cytochrome b gene.</title>
        <authorList>
            <person name="Lim B.K."/>
            <person name="Engstrom M.D."/>
            <person name="Lee T.E. Jr."/>
            <person name="Patton J.C."/>
            <person name="Bickham J.W."/>
        </authorList>
    </citation>
    <scope>NUCLEOTIDE SEQUENCE [GENOMIC DNA]</scope>
    <source>
        <strain>Isolate ROM 107847</strain>
        <strain>Isolate ROM 107904</strain>
    </source>
</reference>
<accession>Q6DUL2</accession>
<name>CYB_ARTAM</name>
<organism>
    <name type="scientific">Artibeus amplus</name>
    <name type="common">Large fruit-eating bat</name>
    <dbReference type="NCBI Taxonomy" id="283491"/>
    <lineage>
        <taxon>Eukaryota</taxon>
        <taxon>Metazoa</taxon>
        <taxon>Chordata</taxon>
        <taxon>Craniata</taxon>
        <taxon>Vertebrata</taxon>
        <taxon>Euteleostomi</taxon>
        <taxon>Mammalia</taxon>
        <taxon>Eutheria</taxon>
        <taxon>Laurasiatheria</taxon>
        <taxon>Chiroptera</taxon>
        <taxon>Yangochiroptera</taxon>
        <taxon>Phyllostomidae</taxon>
        <taxon>Stenodermatinae</taxon>
        <taxon>Artibeus</taxon>
    </lineage>
</organism>
<geneLocation type="mitochondrion"/>
<evidence type="ECO:0000250" key="1"/>
<evidence type="ECO:0000250" key="2">
    <source>
        <dbReference type="UniProtKB" id="P00157"/>
    </source>
</evidence>
<evidence type="ECO:0000255" key="3">
    <source>
        <dbReference type="PROSITE-ProRule" id="PRU00967"/>
    </source>
</evidence>
<evidence type="ECO:0000255" key="4">
    <source>
        <dbReference type="PROSITE-ProRule" id="PRU00968"/>
    </source>
</evidence>
<protein>
    <recommendedName>
        <fullName>Cytochrome b</fullName>
    </recommendedName>
    <alternativeName>
        <fullName>Complex III subunit 3</fullName>
    </alternativeName>
    <alternativeName>
        <fullName>Complex III subunit III</fullName>
    </alternativeName>
    <alternativeName>
        <fullName>Cytochrome b-c1 complex subunit 3</fullName>
    </alternativeName>
    <alternativeName>
        <fullName>Ubiquinol-cytochrome-c reductase complex cytochrome b subunit</fullName>
    </alternativeName>
</protein>
<feature type="chain" id="PRO_0000060622" description="Cytochrome b">
    <location>
        <begin position="1"/>
        <end position="379"/>
    </location>
</feature>
<feature type="transmembrane region" description="Helical" evidence="2">
    <location>
        <begin position="33"/>
        <end position="53"/>
    </location>
</feature>
<feature type="transmembrane region" description="Helical" evidence="2">
    <location>
        <begin position="77"/>
        <end position="98"/>
    </location>
</feature>
<feature type="transmembrane region" description="Helical" evidence="2">
    <location>
        <begin position="113"/>
        <end position="133"/>
    </location>
</feature>
<feature type="transmembrane region" description="Helical" evidence="2">
    <location>
        <begin position="178"/>
        <end position="198"/>
    </location>
</feature>
<feature type="transmembrane region" description="Helical" evidence="2">
    <location>
        <begin position="226"/>
        <end position="246"/>
    </location>
</feature>
<feature type="transmembrane region" description="Helical" evidence="2">
    <location>
        <begin position="288"/>
        <end position="308"/>
    </location>
</feature>
<feature type="transmembrane region" description="Helical" evidence="2">
    <location>
        <begin position="320"/>
        <end position="340"/>
    </location>
</feature>
<feature type="transmembrane region" description="Helical" evidence="2">
    <location>
        <begin position="347"/>
        <end position="367"/>
    </location>
</feature>
<feature type="binding site" description="axial binding residue" evidence="2">
    <location>
        <position position="83"/>
    </location>
    <ligand>
        <name>heme b</name>
        <dbReference type="ChEBI" id="CHEBI:60344"/>
        <label>b562</label>
    </ligand>
    <ligandPart>
        <name>Fe</name>
        <dbReference type="ChEBI" id="CHEBI:18248"/>
    </ligandPart>
</feature>
<feature type="binding site" description="axial binding residue" evidence="2">
    <location>
        <position position="97"/>
    </location>
    <ligand>
        <name>heme b</name>
        <dbReference type="ChEBI" id="CHEBI:60344"/>
        <label>b566</label>
    </ligand>
    <ligandPart>
        <name>Fe</name>
        <dbReference type="ChEBI" id="CHEBI:18248"/>
    </ligandPart>
</feature>
<feature type="binding site" description="axial binding residue" evidence="2">
    <location>
        <position position="182"/>
    </location>
    <ligand>
        <name>heme b</name>
        <dbReference type="ChEBI" id="CHEBI:60344"/>
        <label>b562</label>
    </ligand>
    <ligandPart>
        <name>Fe</name>
        <dbReference type="ChEBI" id="CHEBI:18248"/>
    </ligandPart>
</feature>
<feature type="binding site" description="axial binding residue" evidence="2">
    <location>
        <position position="196"/>
    </location>
    <ligand>
        <name>heme b</name>
        <dbReference type="ChEBI" id="CHEBI:60344"/>
        <label>b566</label>
    </ligand>
    <ligandPart>
        <name>Fe</name>
        <dbReference type="ChEBI" id="CHEBI:18248"/>
    </ligandPart>
</feature>
<feature type="binding site" evidence="2">
    <location>
        <position position="201"/>
    </location>
    <ligand>
        <name>a ubiquinone</name>
        <dbReference type="ChEBI" id="CHEBI:16389"/>
    </ligand>
</feature>
<comment type="function">
    <text evidence="2">Component of the ubiquinol-cytochrome c reductase complex (complex III or cytochrome b-c1 complex) that is part of the mitochondrial respiratory chain. The b-c1 complex mediates electron transfer from ubiquinol to cytochrome c. Contributes to the generation of a proton gradient across the mitochondrial membrane that is then used for ATP synthesis.</text>
</comment>
<comment type="cofactor">
    <cofactor evidence="2">
        <name>heme b</name>
        <dbReference type="ChEBI" id="CHEBI:60344"/>
    </cofactor>
    <text evidence="2">Binds 2 heme b groups non-covalently.</text>
</comment>
<comment type="subunit">
    <text evidence="2">The cytochrome bc1 complex contains 11 subunits: 3 respiratory subunits (MT-CYB, CYC1 and UQCRFS1), 2 core proteins (UQCRC1 and UQCRC2) and 6 low-molecular weight proteins (UQCRH/QCR6, UQCRB/QCR7, UQCRQ/QCR8, UQCR10/QCR9, UQCR11/QCR10 and a cleavage product of UQCRFS1). This cytochrome bc1 complex then forms a dimer.</text>
</comment>
<comment type="subcellular location">
    <subcellularLocation>
        <location evidence="2">Mitochondrion inner membrane</location>
        <topology evidence="2">Multi-pass membrane protein</topology>
    </subcellularLocation>
</comment>
<comment type="miscellaneous">
    <text evidence="1">Heme 1 (or BL or b562) is low-potential and absorbs at about 562 nm, and heme 2 (or BH or b566) is high-potential and absorbs at about 566 nm.</text>
</comment>
<comment type="similarity">
    <text evidence="3 4">Belongs to the cytochrome b family.</text>
</comment>
<comment type="caution">
    <text evidence="2">The full-length protein contains only eight transmembrane helices, not nine as predicted by bioinformatics tools.</text>
</comment>
<proteinExistence type="inferred from homology"/>
<sequence length="379" mass="42738">MTNIRKTHPLLKIINSSFVDLPAPSSLSSWWNFGSLLGVCLAVQILTGLFLAMHYTSDTATAFNSVTHICRDVNYGWLLRYLHANGASMFFICLYLHVGRGLYYGSYTYSETWNIGILLLFAVMATAFMGYVLPWGQMSFWGATVITNLLSAIPYIGTDLVQWIWGGFSVDKATLTRFFAFHFLLPFIVTALVMVHLLFLHETGSNNPTGIPSDPDMIPFHPYYTIKDILGFLVMLTALATLVLFSPDLLGDPDNYIPANPLNTPPHIKPEWYFLFAYAILRSIPNKLGGVLALVMSILILAIVPILHMSKQRSMMFRPLSQCLFWLLVAVLFTLTWIGGQPVEHPYIIIGQTASVLYFLIILFLMPMISLVENYLLKW</sequence>
<gene>
    <name type="primary">MT-CYB</name>
    <name type="synonym">COB</name>
    <name type="synonym">CYTB</name>
    <name type="synonym">MTCYB</name>
</gene>